<comment type="function">
    <text evidence="1 2">Activates KDO8N (a required 8-carbon sugar) for incorporation into bacterial lipopolysaccharide in the Shewanella genus.</text>
</comment>
<comment type="catalytic activity">
    <reaction evidence="1 2">
        <text>8-amino-3,8-dideoxy-alpha-D-manno-octulosonate + CTP = CMP-8-amino-3,8-dideoxy-alpha-D-manno-oct-2-ulosonate + diphosphate</text>
        <dbReference type="Rhea" id="RHEA:49284"/>
        <dbReference type="ChEBI" id="CHEBI:33019"/>
        <dbReference type="ChEBI" id="CHEBI:37563"/>
        <dbReference type="ChEBI" id="CHEBI:87091"/>
        <dbReference type="ChEBI" id="CHEBI:91089"/>
        <dbReference type="EC" id="2.7.7.90"/>
    </reaction>
</comment>
<comment type="pathway">
    <text evidence="1">Bacterial outer membrane biogenesis; lipopolysaccharide biosynthesis.</text>
</comment>
<comment type="subcellular location">
    <subcellularLocation>
        <location evidence="1">Cytoplasm</location>
    </subcellularLocation>
</comment>
<comment type="similarity">
    <text evidence="1">Belongs to the KdsB family.</text>
</comment>
<sequence>MNVTLLIPARYGSSRFPGKPLAPINGKPMIQHVYERASLAKGLTNIYVATDDERIKSAVEGFGGKVVMTSPDAASGTDRINDAINQLGLKDDDLVINLQGDQPLIDPTSIEQVISLFERHPGEFEMATLGYEIVNKAELDDPMHVKMVFDNDYYALYFSRARIPFGRDTKDYPVYKHLGVYAYTRRFVQAFAALPLGRLEDLEKLEQLRALEYGHKIKVAISAFDSIEVDTPEDIRKCEQRLAVD</sequence>
<dbReference type="EC" id="2.7.7.90" evidence="1 2"/>
<dbReference type="EMBL" id="AE014299">
    <property type="protein sequence ID" value="AAN55509.1"/>
    <property type="molecule type" value="Genomic_DNA"/>
</dbReference>
<dbReference type="RefSeq" id="NP_718065.1">
    <property type="nucleotide sequence ID" value="NC_004347.2"/>
</dbReference>
<dbReference type="RefSeq" id="WP_011072444.1">
    <property type="nucleotide sequence ID" value="NC_004347.2"/>
</dbReference>
<dbReference type="SMR" id="Q8EEA9"/>
<dbReference type="STRING" id="211586.SO_2478"/>
<dbReference type="PaxDb" id="211586-SO_2478"/>
<dbReference type="KEGG" id="son:SO_2478"/>
<dbReference type="PATRIC" id="fig|211586.12.peg.2387"/>
<dbReference type="eggNOG" id="COG1212">
    <property type="taxonomic scope" value="Bacteria"/>
</dbReference>
<dbReference type="HOGENOM" id="CLU_065038_0_1_6"/>
<dbReference type="OrthoDB" id="9815559at2"/>
<dbReference type="PhylomeDB" id="Q8EEA9"/>
<dbReference type="BioCyc" id="MetaCyc:MONOMER-19350"/>
<dbReference type="BioCyc" id="SONE211586:G1GMP-2264-MONOMER"/>
<dbReference type="BRENDA" id="2.7.7.90">
    <property type="organism ID" value="5706"/>
</dbReference>
<dbReference type="UniPathway" id="UPA00030"/>
<dbReference type="Proteomes" id="UP000008186">
    <property type="component" value="Chromosome"/>
</dbReference>
<dbReference type="GO" id="GO:0005829">
    <property type="term" value="C:cytosol"/>
    <property type="evidence" value="ECO:0000318"/>
    <property type="project" value="GO_Central"/>
</dbReference>
<dbReference type="GO" id="GO:0008690">
    <property type="term" value="F:3-deoxy-manno-octulosonate cytidylyltransferase activity"/>
    <property type="evidence" value="ECO:0000318"/>
    <property type="project" value="GO_Central"/>
</dbReference>
<dbReference type="GO" id="GO:0009103">
    <property type="term" value="P:lipopolysaccharide biosynthetic process"/>
    <property type="evidence" value="ECO:0007669"/>
    <property type="project" value="UniProtKB-UniRule"/>
</dbReference>
<dbReference type="CDD" id="cd02517">
    <property type="entry name" value="CMP-KDO-Synthetase"/>
    <property type="match status" value="1"/>
</dbReference>
<dbReference type="FunFam" id="3.90.550.10:FF:000168">
    <property type="entry name" value="8-amino-3,8-dideoxy-manno-octulosonate cytidylyltransferase"/>
    <property type="match status" value="1"/>
</dbReference>
<dbReference type="Gene3D" id="3.90.550.10">
    <property type="entry name" value="Spore Coat Polysaccharide Biosynthesis Protein SpsA, Chain A"/>
    <property type="match status" value="1"/>
</dbReference>
<dbReference type="HAMAP" id="MF_00057">
    <property type="entry name" value="KdsB"/>
    <property type="match status" value="1"/>
</dbReference>
<dbReference type="InterPro" id="IPR003329">
    <property type="entry name" value="Cytidylyl_trans"/>
</dbReference>
<dbReference type="InterPro" id="IPR004528">
    <property type="entry name" value="KdsB"/>
</dbReference>
<dbReference type="InterPro" id="IPR029044">
    <property type="entry name" value="Nucleotide-diphossugar_trans"/>
</dbReference>
<dbReference type="NCBIfam" id="TIGR00466">
    <property type="entry name" value="kdsB"/>
    <property type="match status" value="1"/>
</dbReference>
<dbReference type="NCBIfam" id="NF003950">
    <property type="entry name" value="PRK05450.1-3"/>
    <property type="match status" value="1"/>
</dbReference>
<dbReference type="NCBIfam" id="NF003952">
    <property type="entry name" value="PRK05450.1-5"/>
    <property type="match status" value="1"/>
</dbReference>
<dbReference type="NCBIfam" id="NF009905">
    <property type="entry name" value="PRK13368.1"/>
    <property type="match status" value="1"/>
</dbReference>
<dbReference type="PANTHER" id="PTHR42866">
    <property type="entry name" value="3-DEOXY-MANNO-OCTULOSONATE CYTIDYLYLTRANSFERASE"/>
    <property type="match status" value="1"/>
</dbReference>
<dbReference type="PANTHER" id="PTHR42866:SF2">
    <property type="entry name" value="3-DEOXY-MANNO-OCTULOSONATE CYTIDYLYLTRANSFERASE, MITOCHONDRIAL"/>
    <property type="match status" value="1"/>
</dbReference>
<dbReference type="Pfam" id="PF02348">
    <property type="entry name" value="CTP_transf_3"/>
    <property type="match status" value="1"/>
</dbReference>
<dbReference type="SUPFAM" id="SSF53448">
    <property type="entry name" value="Nucleotide-diphospho-sugar transferases"/>
    <property type="match status" value="1"/>
</dbReference>
<evidence type="ECO:0000255" key="1">
    <source>
        <dbReference type="HAMAP-Rule" id="MF_00057"/>
    </source>
</evidence>
<evidence type="ECO:0000269" key="2">
    <source>
    </source>
</evidence>
<evidence type="ECO:0000303" key="3">
    <source>
    </source>
</evidence>
<reference key="1">
    <citation type="journal article" date="2002" name="Nat. Biotechnol.">
        <title>Genome sequence of the dissimilatory metal ion-reducing bacterium Shewanella oneidensis.</title>
        <authorList>
            <person name="Heidelberg J.F."/>
            <person name="Paulsen I.T."/>
            <person name="Nelson K.E."/>
            <person name="Gaidos E.J."/>
            <person name="Nelson W.C."/>
            <person name="Read T.D."/>
            <person name="Eisen J.A."/>
            <person name="Seshadri R."/>
            <person name="Ward N.L."/>
            <person name="Methe B.A."/>
            <person name="Clayton R.A."/>
            <person name="Meyer T."/>
            <person name="Tsapin A."/>
            <person name="Scott J."/>
            <person name="Beanan M.J."/>
            <person name="Brinkac L.M."/>
            <person name="Daugherty S.C."/>
            <person name="DeBoy R.T."/>
            <person name="Dodson R.J."/>
            <person name="Durkin A.S."/>
            <person name="Haft D.H."/>
            <person name="Kolonay J.F."/>
            <person name="Madupu R."/>
            <person name="Peterson J.D."/>
            <person name="Umayam L.A."/>
            <person name="White O."/>
            <person name="Wolf A.M."/>
            <person name="Vamathevan J.J."/>
            <person name="Weidman J.F."/>
            <person name="Impraim M."/>
            <person name="Lee K."/>
            <person name="Berry K.J."/>
            <person name="Lee C."/>
            <person name="Mueller J."/>
            <person name="Khouri H.M."/>
            <person name="Gill J."/>
            <person name="Utterback T.R."/>
            <person name="McDonald L.A."/>
            <person name="Feldblyum T.V."/>
            <person name="Smith H.O."/>
            <person name="Venter J.C."/>
            <person name="Nealson K.H."/>
            <person name="Fraser C.M."/>
        </authorList>
    </citation>
    <scope>NUCLEOTIDE SEQUENCE [LARGE SCALE GENOMIC DNA]</scope>
    <source>
        <strain>ATCC 700550 / JCM 31522 / CIP 106686 / LMG 19005 / NCIMB 14063 / MR-1</strain>
    </source>
</reference>
<reference key="2">
    <citation type="journal article" date="2013" name="J. Biol. Chem.">
        <title>The origin of 8-amino-3,8-dideoxy-D-manno-octulosonic acid (Kdo8N) in the lipopolysaccharide of Shewanella oneidensis.</title>
        <authorList>
            <person name="Gattis S.G."/>
            <person name="Chung H.S."/>
            <person name="Trent M.S."/>
            <person name="Raetz C.R."/>
        </authorList>
    </citation>
    <scope>FUNCTION IN CMP-KDO8N FORMATION</scope>
    <scope>CATALYTIC ACTIVITY</scope>
    <source>
        <strain>ATCC 700550 / JCM 31522 / CIP 106686 / LMG 19005 / NCIMB 14063 / MR-1</strain>
    </source>
</reference>
<gene>
    <name evidence="1 3" type="primary">kdsB</name>
    <name type="ordered locus">SO_2478</name>
</gene>
<feature type="chain" id="PRO_0000370152" description="8-amino-3,8-dideoxy-manno-octulosonate cytidylyltransferase">
    <location>
        <begin position="1"/>
        <end position="245"/>
    </location>
</feature>
<protein>
    <recommendedName>
        <fullName evidence="1">8-amino-3,8-dideoxy-manno-octulosonate cytidylyltransferase</fullName>
        <ecNumber evidence="1 2">2.7.7.90</ecNumber>
    </recommendedName>
    <alternativeName>
        <fullName evidence="1">CMP-8-amino-3,8-dideoxy-manno-octulosonate synthase</fullName>
    </alternativeName>
</protein>
<accession>Q8EEA9</accession>
<organism>
    <name type="scientific">Shewanella oneidensis (strain ATCC 700550 / JCM 31522 / CIP 106686 / LMG 19005 / NCIMB 14063 / MR-1)</name>
    <dbReference type="NCBI Taxonomy" id="211586"/>
    <lineage>
        <taxon>Bacteria</taxon>
        <taxon>Pseudomonadati</taxon>
        <taxon>Pseudomonadota</taxon>
        <taxon>Gammaproteobacteria</taxon>
        <taxon>Alteromonadales</taxon>
        <taxon>Shewanellaceae</taxon>
        <taxon>Shewanella</taxon>
    </lineage>
</organism>
<proteinExistence type="evidence at protein level"/>
<keyword id="KW-0963">Cytoplasm</keyword>
<keyword id="KW-0448">Lipopolysaccharide biosynthesis</keyword>
<keyword id="KW-0548">Nucleotidyltransferase</keyword>
<keyword id="KW-1185">Reference proteome</keyword>
<keyword id="KW-0808">Transferase</keyword>
<name>KDSB_SHEON</name>